<proteinExistence type="inferred from homology"/>
<gene>
    <name evidence="1" type="primary">gcvP</name>
    <name type="ordered locus">BAB2_0515</name>
</gene>
<protein>
    <recommendedName>
        <fullName evidence="1">Glycine dehydrogenase (decarboxylating)</fullName>
        <ecNumber evidence="1">1.4.4.2</ecNumber>
    </recommendedName>
    <alternativeName>
        <fullName evidence="1">Glycine cleavage system P-protein</fullName>
    </alternativeName>
    <alternativeName>
        <fullName evidence="1">Glycine decarboxylase</fullName>
    </alternativeName>
    <alternativeName>
        <fullName evidence="1">Glycine dehydrogenase (aminomethyl-transferring)</fullName>
    </alternativeName>
</protein>
<comment type="function">
    <text evidence="1">The glycine cleavage system catalyzes the degradation of glycine. The P protein binds the alpha-amino group of glycine through its pyridoxal phosphate cofactor; CO(2) is released and the remaining methylamine moiety is then transferred to the lipoamide cofactor of the H protein.</text>
</comment>
<comment type="catalytic activity">
    <reaction evidence="1">
        <text>N(6)-[(R)-lipoyl]-L-lysyl-[glycine-cleavage complex H protein] + glycine + H(+) = N(6)-[(R)-S(8)-aminomethyldihydrolipoyl]-L-lysyl-[glycine-cleavage complex H protein] + CO2</text>
        <dbReference type="Rhea" id="RHEA:24304"/>
        <dbReference type="Rhea" id="RHEA-COMP:10494"/>
        <dbReference type="Rhea" id="RHEA-COMP:10495"/>
        <dbReference type="ChEBI" id="CHEBI:15378"/>
        <dbReference type="ChEBI" id="CHEBI:16526"/>
        <dbReference type="ChEBI" id="CHEBI:57305"/>
        <dbReference type="ChEBI" id="CHEBI:83099"/>
        <dbReference type="ChEBI" id="CHEBI:83143"/>
        <dbReference type="EC" id="1.4.4.2"/>
    </reaction>
</comment>
<comment type="cofactor">
    <cofactor evidence="1">
        <name>pyridoxal 5'-phosphate</name>
        <dbReference type="ChEBI" id="CHEBI:597326"/>
    </cofactor>
</comment>
<comment type="subunit">
    <text evidence="1">The glycine cleavage system is composed of four proteins: P, T, L and H.</text>
</comment>
<comment type="similarity">
    <text evidence="1">Belongs to the GcvP family.</text>
</comment>
<sequence>MTEFLPFVARHIGPRHEDERAMLAALGLPSMETLITQAVPAPIRLNRALNLPAALSEADALAELGTIMGRNVVKKSFIGAGYHGVHTPPVIQRNLFENPAWYTAYTPYQSEISQGRLELLFHFQTLVAELTGLPVACASLLDEATAVAEAIGVACRHHRDKRSRILLAGELHPQTVDVVNTRAEPLGWEIATGSDVDDNTAAIVVPWPDTRGVYGDFAKVIADAKAKGALVIAVADPLALTIMEAPARWGADMAVGSMQRYGVPMGFGGPHAAYLAVSEALTRIIPGRIVGQSVDAHGRAAYRLALQTREQHIRRDKATSNICTAQALLANMAAAFAIWHGPAGLQAIATRVAALAARFAAALKAAGVEIAGESLFDTVTAKVPGKAAAIAAEADKGGRLIRIIDADTVGVTFDETSTEEDLTALASLFGAKPVGGDTVLVPGKERGEGFLTQEVFHSHRSETEMMRFLRRLADKDLALDRAMIPLGSCTMKLNAAAEMMPVSWNTVANLHPFAPAEQVQGYAKMTSDLEAWLCEITGFAGVSLQPNAGSQGEYAGLMAIRHYHQARGQGHRNICLIPSSAHGTNPASASMAGMSVVVVNCRPDGDIDIDDLKAKAEKHRDNLAAFMITYPSTYGVFEEGIKAFCEIVHDNGGQVYFDGANLNALVGLARPADIGADVCHMNLHKTFCIPHGGGGPGVGPIGVAKHLVPYLPGHVEAGSEHAVAAAQFGSASILVITWMYIRMMGGAGLKKATEAAILNANYIAHRLKGVYPILYTGAHDRVAHECIVDTRVLKDSAGITVEDVAKRLIDYGFHAPTMSWPVAGTLMIEPTESEPKLEIDRLCDAMIAIAGEAKKVADGVWPADDNPLANAPHTASDTLATEWKHPYTREEAVFPGGAFDPTAKYWPPVSRVDNVGGDRNLICSCPPVATYG</sequence>
<reference key="1">
    <citation type="journal article" date="2005" name="Infect. Immun.">
        <title>Whole-genome analyses of speciation events in pathogenic Brucellae.</title>
        <authorList>
            <person name="Chain P.S."/>
            <person name="Comerci D.J."/>
            <person name="Tolmasky M.E."/>
            <person name="Larimer F.W."/>
            <person name="Malfatti S.A."/>
            <person name="Vergez L.M."/>
            <person name="Aguero F."/>
            <person name="Land M.L."/>
            <person name="Ugalde R.A."/>
            <person name="Garcia E."/>
        </authorList>
    </citation>
    <scope>NUCLEOTIDE SEQUENCE [LARGE SCALE GENOMIC DNA]</scope>
    <source>
        <strain>2308</strain>
    </source>
</reference>
<dbReference type="EC" id="1.4.4.2" evidence="1"/>
<dbReference type="EMBL" id="AM040265">
    <property type="protein sequence ID" value="CAJ12681.1"/>
    <property type="molecule type" value="Genomic_DNA"/>
</dbReference>
<dbReference type="RefSeq" id="WP_002967268.1">
    <property type="nucleotide sequence ID" value="NZ_KN046823.1"/>
</dbReference>
<dbReference type="SMR" id="Q2YKX9"/>
<dbReference type="STRING" id="359391.BAB2_0515"/>
<dbReference type="GeneID" id="93015578"/>
<dbReference type="KEGG" id="bmf:BAB2_0515"/>
<dbReference type="PATRIC" id="fig|359391.11.peg.2705"/>
<dbReference type="HOGENOM" id="CLU_004620_2_1_5"/>
<dbReference type="PhylomeDB" id="Q2YKX9"/>
<dbReference type="PRO" id="PR:Q2YKX9"/>
<dbReference type="Proteomes" id="UP000002719">
    <property type="component" value="Chromosome II"/>
</dbReference>
<dbReference type="GO" id="GO:0005829">
    <property type="term" value="C:cytosol"/>
    <property type="evidence" value="ECO:0007669"/>
    <property type="project" value="TreeGrafter"/>
</dbReference>
<dbReference type="GO" id="GO:0005960">
    <property type="term" value="C:glycine cleavage complex"/>
    <property type="evidence" value="ECO:0007669"/>
    <property type="project" value="TreeGrafter"/>
</dbReference>
<dbReference type="GO" id="GO:0016594">
    <property type="term" value="F:glycine binding"/>
    <property type="evidence" value="ECO:0007669"/>
    <property type="project" value="TreeGrafter"/>
</dbReference>
<dbReference type="GO" id="GO:0004375">
    <property type="term" value="F:glycine dehydrogenase (decarboxylating) activity"/>
    <property type="evidence" value="ECO:0007669"/>
    <property type="project" value="UniProtKB-EC"/>
</dbReference>
<dbReference type="GO" id="GO:0030170">
    <property type="term" value="F:pyridoxal phosphate binding"/>
    <property type="evidence" value="ECO:0007669"/>
    <property type="project" value="TreeGrafter"/>
</dbReference>
<dbReference type="GO" id="GO:0019464">
    <property type="term" value="P:glycine decarboxylation via glycine cleavage system"/>
    <property type="evidence" value="ECO:0007669"/>
    <property type="project" value="UniProtKB-UniRule"/>
</dbReference>
<dbReference type="CDD" id="cd00613">
    <property type="entry name" value="GDC-P"/>
    <property type="match status" value="2"/>
</dbReference>
<dbReference type="FunFam" id="3.90.1150.10:FF:000007">
    <property type="entry name" value="Glycine dehydrogenase (decarboxylating), mitochondrial"/>
    <property type="match status" value="1"/>
</dbReference>
<dbReference type="FunFam" id="3.40.640.10:FF:000007">
    <property type="entry name" value="glycine dehydrogenase (Decarboxylating), mitochondrial"/>
    <property type="match status" value="1"/>
</dbReference>
<dbReference type="Gene3D" id="3.90.1150.10">
    <property type="entry name" value="Aspartate Aminotransferase, domain 1"/>
    <property type="match status" value="2"/>
</dbReference>
<dbReference type="Gene3D" id="3.40.640.10">
    <property type="entry name" value="Type I PLP-dependent aspartate aminotransferase-like (Major domain)"/>
    <property type="match status" value="2"/>
</dbReference>
<dbReference type="HAMAP" id="MF_00711">
    <property type="entry name" value="GcvP"/>
    <property type="match status" value="1"/>
</dbReference>
<dbReference type="InterPro" id="IPR003437">
    <property type="entry name" value="GcvP"/>
</dbReference>
<dbReference type="InterPro" id="IPR049316">
    <property type="entry name" value="GDC-P_C"/>
</dbReference>
<dbReference type="InterPro" id="IPR049315">
    <property type="entry name" value="GDC-P_N"/>
</dbReference>
<dbReference type="InterPro" id="IPR020581">
    <property type="entry name" value="GDC_P"/>
</dbReference>
<dbReference type="InterPro" id="IPR015424">
    <property type="entry name" value="PyrdxlP-dep_Trfase"/>
</dbReference>
<dbReference type="InterPro" id="IPR015421">
    <property type="entry name" value="PyrdxlP-dep_Trfase_major"/>
</dbReference>
<dbReference type="InterPro" id="IPR015422">
    <property type="entry name" value="PyrdxlP-dep_Trfase_small"/>
</dbReference>
<dbReference type="NCBIfam" id="TIGR00461">
    <property type="entry name" value="gcvP"/>
    <property type="match status" value="1"/>
</dbReference>
<dbReference type="NCBIfam" id="NF003346">
    <property type="entry name" value="PRK04366.1"/>
    <property type="match status" value="1"/>
</dbReference>
<dbReference type="PANTHER" id="PTHR11773:SF1">
    <property type="entry name" value="GLYCINE DEHYDROGENASE (DECARBOXYLATING), MITOCHONDRIAL"/>
    <property type="match status" value="1"/>
</dbReference>
<dbReference type="PANTHER" id="PTHR11773">
    <property type="entry name" value="GLYCINE DEHYDROGENASE, DECARBOXYLATING"/>
    <property type="match status" value="1"/>
</dbReference>
<dbReference type="Pfam" id="PF21478">
    <property type="entry name" value="GcvP2_C"/>
    <property type="match status" value="1"/>
</dbReference>
<dbReference type="Pfam" id="PF02347">
    <property type="entry name" value="GDC-P"/>
    <property type="match status" value="2"/>
</dbReference>
<dbReference type="SUPFAM" id="SSF53383">
    <property type="entry name" value="PLP-dependent transferases"/>
    <property type="match status" value="2"/>
</dbReference>
<feature type="chain" id="PRO_0000227096" description="Glycine dehydrogenase (decarboxylating)">
    <location>
        <begin position="1"/>
        <end position="932"/>
    </location>
</feature>
<feature type="modified residue" description="N6-(pyridoxal phosphate)lysine" evidence="1">
    <location>
        <position position="685"/>
    </location>
</feature>
<organism>
    <name type="scientific">Brucella abortus (strain 2308)</name>
    <dbReference type="NCBI Taxonomy" id="359391"/>
    <lineage>
        <taxon>Bacteria</taxon>
        <taxon>Pseudomonadati</taxon>
        <taxon>Pseudomonadota</taxon>
        <taxon>Alphaproteobacteria</taxon>
        <taxon>Hyphomicrobiales</taxon>
        <taxon>Brucellaceae</taxon>
        <taxon>Brucella/Ochrobactrum group</taxon>
        <taxon>Brucella</taxon>
    </lineage>
</organism>
<accession>Q2YKX9</accession>
<name>GCSP_BRUA2</name>
<evidence type="ECO:0000255" key="1">
    <source>
        <dbReference type="HAMAP-Rule" id="MF_00711"/>
    </source>
</evidence>
<keyword id="KW-0560">Oxidoreductase</keyword>
<keyword id="KW-0663">Pyridoxal phosphate</keyword>
<keyword id="KW-1185">Reference proteome</keyword>